<organism>
    <name type="scientific">Rhodopseudomonas palustris (strain ATCC BAA-98 / CGA009)</name>
    <dbReference type="NCBI Taxonomy" id="258594"/>
    <lineage>
        <taxon>Bacteria</taxon>
        <taxon>Pseudomonadati</taxon>
        <taxon>Pseudomonadota</taxon>
        <taxon>Alphaproteobacteria</taxon>
        <taxon>Hyphomicrobiales</taxon>
        <taxon>Nitrobacteraceae</taxon>
        <taxon>Rhodopseudomonas</taxon>
    </lineage>
</organism>
<sequence>MSDKPKTDAAQSGNDYSKTLFLPQTEFPMRAGLPQREPELLKRWEEMDLYGKLRESARGRAKFVLHDGPPYANGNIHIGHALNKILKDVVTKSQQMLGFDSNYVPGWDCHGLPIEWKIEEENYRSKGKPKPNFKDSAAIIAFRKECRAYADKWLNVQREEFKRLGVIGDWDHPYATMNYAAEAQIARELMKFAANGTLYRGSKPVMWSVVEKTALAEAEVEYEDYTSDTVWVKFPVKTGDASTKDASVVIWTTTPWTLPGNRAISFSSKIAYGLYKVTDAPADNWAKTGDLLILADGLAESVFKQARVVAYEKVSDVGADVLKASECAHPLQGLAGGYEFTVPLLDGDHVTDDTGTGFVHTAPGHGREDFDIWMHNARALEARGISSVIPYTVDENGALTEQAPGFTGKRVINDKGEKGDANEAVIQALIARGALLARGKLKHQYPHSWRSKKPVIFRNTPQWFIAMDKDIVDDGVAKPGDTLRARALQAISVTQWVPPAGQNRINGMISGRPDWVISRQRAWGVPIAVFIKDKGDGSVEILQDEIVNQRIAEAFMQEGADAWYAEGAAERFLGDRAAEGWRKVDDILDVWFDSGSTHAFVLEDAQNFPGLAGIRRKVDGGADTVMYLEGSDQHRGWFHSSLLESCGTRGRAPYDVVLTHGFTLDEQGRKMSKSLGNTTDPAKVIASSGADILRLWVCATDYADDQRIGPEILKNVVETYRKLRNSIRWMLGTLHHYHRDEAVAFADMPELERLMLHQLAEQSATVRAAYAEFDYKTVVASLAAFMNTELSAFYFDIRKDTLYCDPPSSLARKAALTTIDIICDAILKWLAPVLSFTADEAWSMYRPDAEPSVHLTLFPLDLGEYRDDALAKKWTLIRAVRRVVTGALEVERAAKRIGSSLEASPMIYLPEAFMGDIFDVDWAEICITSNAMVEILRGNDTPPADAFRLPELADVAVVVERAQGTKCARSWKILSSVGSDAEYPDVSPRDAQALREWKALGGAAA</sequence>
<keyword id="KW-0030">Aminoacyl-tRNA synthetase</keyword>
<keyword id="KW-0067">ATP-binding</keyword>
<keyword id="KW-0963">Cytoplasm</keyword>
<keyword id="KW-0436">Ligase</keyword>
<keyword id="KW-0547">Nucleotide-binding</keyword>
<keyword id="KW-0648">Protein biosynthesis</keyword>
<accession>Q6N1M8</accession>
<reference key="1">
    <citation type="journal article" date="2004" name="Nat. Biotechnol.">
        <title>Complete genome sequence of the metabolically versatile photosynthetic bacterium Rhodopseudomonas palustris.</title>
        <authorList>
            <person name="Larimer F.W."/>
            <person name="Chain P."/>
            <person name="Hauser L."/>
            <person name="Lamerdin J.E."/>
            <person name="Malfatti S."/>
            <person name="Do L."/>
            <person name="Land M.L."/>
            <person name="Pelletier D.A."/>
            <person name="Beatty J.T."/>
            <person name="Lang A.S."/>
            <person name="Tabita F.R."/>
            <person name="Gibson J.L."/>
            <person name="Hanson T.E."/>
            <person name="Bobst C."/>
            <person name="Torres y Torres J.L."/>
            <person name="Peres C."/>
            <person name="Harrison F.H."/>
            <person name="Gibson J."/>
            <person name="Harwood C.S."/>
        </authorList>
    </citation>
    <scope>NUCLEOTIDE SEQUENCE [LARGE SCALE GENOMIC DNA]</scope>
    <source>
        <strain>ATCC BAA-98 / CGA009</strain>
    </source>
</reference>
<gene>
    <name evidence="1" type="primary">ileS</name>
    <name type="ordered locus">RPA4377</name>
</gene>
<protein>
    <recommendedName>
        <fullName evidence="1">Isoleucine--tRNA ligase</fullName>
        <ecNumber evidence="1">6.1.1.5</ecNumber>
    </recommendedName>
    <alternativeName>
        <fullName evidence="1">Isoleucyl-tRNA synthetase</fullName>
        <shortName evidence="1">IleRS</shortName>
    </alternativeName>
</protein>
<feature type="chain" id="PRO_0000098454" description="Isoleucine--tRNA ligase">
    <location>
        <begin position="1"/>
        <end position="1005"/>
    </location>
</feature>
<feature type="short sequence motif" description="'HIGH' region">
    <location>
        <begin position="70"/>
        <end position="80"/>
    </location>
</feature>
<feature type="short sequence motif" description="'KMSKS' region">
    <location>
        <begin position="670"/>
        <end position="674"/>
    </location>
</feature>
<feature type="binding site" evidence="1">
    <location>
        <position position="629"/>
    </location>
    <ligand>
        <name>L-isoleucyl-5'-AMP</name>
        <dbReference type="ChEBI" id="CHEBI:178002"/>
    </ligand>
</feature>
<feature type="binding site" evidence="1">
    <location>
        <position position="673"/>
    </location>
    <ligand>
        <name>ATP</name>
        <dbReference type="ChEBI" id="CHEBI:30616"/>
    </ligand>
</feature>
<proteinExistence type="inferred from homology"/>
<evidence type="ECO:0000255" key="1">
    <source>
        <dbReference type="HAMAP-Rule" id="MF_02002"/>
    </source>
</evidence>
<dbReference type="EC" id="6.1.1.5" evidence="1"/>
<dbReference type="EMBL" id="BX572607">
    <property type="protein sequence ID" value="CAE29818.1"/>
    <property type="molecule type" value="Genomic_DNA"/>
</dbReference>
<dbReference type="RefSeq" id="WP_011159911.1">
    <property type="nucleotide sequence ID" value="NZ_CP116810.1"/>
</dbReference>
<dbReference type="SMR" id="Q6N1M8"/>
<dbReference type="STRING" id="258594.RPA4377"/>
<dbReference type="GeneID" id="66895511"/>
<dbReference type="eggNOG" id="COG0060">
    <property type="taxonomic scope" value="Bacteria"/>
</dbReference>
<dbReference type="HOGENOM" id="CLU_001493_7_1_5"/>
<dbReference type="PhylomeDB" id="Q6N1M8"/>
<dbReference type="GO" id="GO:0005829">
    <property type="term" value="C:cytosol"/>
    <property type="evidence" value="ECO:0007669"/>
    <property type="project" value="TreeGrafter"/>
</dbReference>
<dbReference type="GO" id="GO:0002161">
    <property type="term" value="F:aminoacyl-tRNA deacylase activity"/>
    <property type="evidence" value="ECO:0007669"/>
    <property type="project" value="InterPro"/>
</dbReference>
<dbReference type="GO" id="GO:0005524">
    <property type="term" value="F:ATP binding"/>
    <property type="evidence" value="ECO:0007669"/>
    <property type="project" value="UniProtKB-UniRule"/>
</dbReference>
<dbReference type="GO" id="GO:0004822">
    <property type="term" value="F:isoleucine-tRNA ligase activity"/>
    <property type="evidence" value="ECO:0007669"/>
    <property type="project" value="UniProtKB-UniRule"/>
</dbReference>
<dbReference type="GO" id="GO:0000049">
    <property type="term" value="F:tRNA binding"/>
    <property type="evidence" value="ECO:0007669"/>
    <property type="project" value="InterPro"/>
</dbReference>
<dbReference type="GO" id="GO:0006428">
    <property type="term" value="P:isoleucyl-tRNA aminoacylation"/>
    <property type="evidence" value="ECO:0007669"/>
    <property type="project" value="UniProtKB-UniRule"/>
</dbReference>
<dbReference type="CDD" id="cd07960">
    <property type="entry name" value="Anticodon_Ia_Ile_BEm"/>
    <property type="match status" value="1"/>
</dbReference>
<dbReference type="FunFam" id="3.40.50.620:FF:000042">
    <property type="entry name" value="Isoleucine--tRNA ligase"/>
    <property type="match status" value="1"/>
</dbReference>
<dbReference type="FunFam" id="3.90.740.10:FF:000022">
    <property type="entry name" value="Isoleucine--tRNA ligase"/>
    <property type="match status" value="1"/>
</dbReference>
<dbReference type="Gene3D" id="1.10.730.20">
    <property type="match status" value="1"/>
</dbReference>
<dbReference type="Gene3D" id="3.40.50.620">
    <property type="entry name" value="HUPs"/>
    <property type="match status" value="2"/>
</dbReference>
<dbReference type="Gene3D" id="3.90.740.10">
    <property type="entry name" value="Valyl/Leucyl/Isoleucyl-tRNA synthetase, editing domain"/>
    <property type="match status" value="1"/>
</dbReference>
<dbReference type="HAMAP" id="MF_02002">
    <property type="entry name" value="Ile_tRNA_synth_type1"/>
    <property type="match status" value="1"/>
</dbReference>
<dbReference type="InterPro" id="IPR001412">
    <property type="entry name" value="aa-tRNA-synth_I_CS"/>
</dbReference>
<dbReference type="InterPro" id="IPR002300">
    <property type="entry name" value="aa-tRNA-synth_Ia"/>
</dbReference>
<dbReference type="InterPro" id="IPR033708">
    <property type="entry name" value="Anticodon_Ile_BEm"/>
</dbReference>
<dbReference type="InterPro" id="IPR002301">
    <property type="entry name" value="Ile-tRNA-ligase"/>
</dbReference>
<dbReference type="InterPro" id="IPR023585">
    <property type="entry name" value="Ile-tRNA-ligase_type1"/>
</dbReference>
<dbReference type="InterPro" id="IPR050081">
    <property type="entry name" value="Ile-tRNA_ligase"/>
</dbReference>
<dbReference type="InterPro" id="IPR013155">
    <property type="entry name" value="M/V/L/I-tRNA-synth_anticd-bd"/>
</dbReference>
<dbReference type="InterPro" id="IPR014729">
    <property type="entry name" value="Rossmann-like_a/b/a_fold"/>
</dbReference>
<dbReference type="InterPro" id="IPR009080">
    <property type="entry name" value="tRNAsynth_Ia_anticodon-bd"/>
</dbReference>
<dbReference type="InterPro" id="IPR009008">
    <property type="entry name" value="Val/Leu/Ile-tRNA-synth_edit"/>
</dbReference>
<dbReference type="NCBIfam" id="TIGR00392">
    <property type="entry name" value="ileS"/>
    <property type="match status" value="1"/>
</dbReference>
<dbReference type="PANTHER" id="PTHR42765:SF1">
    <property type="entry name" value="ISOLEUCINE--TRNA LIGASE, MITOCHONDRIAL"/>
    <property type="match status" value="1"/>
</dbReference>
<dbReference type="PANTHER" id="PTHR42765">
    <property type="entry name" value="SOLEUCYL-TRNA SYNTHETASE"/>
    <property type="match status" value="1"/>
</dbReference>
<dbReference type="Pfam" id="PF08264">
    <property type="entry name" value="Anticodon_1"/>
    <property type="match status" value="1"/>
</dbReference>
<dbReference type="Pfam" id="PF00133">
    <property type="entry name" value="tRNA-synt_1"/>
    <property type="match status" value="1"/>
</dbReference>
<dbReference type="PRINTS" id="PR00984">
    <property type="entry name" value="TRNASYNTHILE"/>
</dbReference>
<dbReference type="SUPFAM" id="SSF47323">
    <property type="entry name" value="Anticodon-binding domain of a subclass of class I aminoacyl-tRNA synthetases"/>
    <property type="match status" value="1"/>
</dbReference>
<dbReference type="SUPFAM" id="SSF52374">
    <property type="entry name" value="Nucleotidylyl transferase"/>
    <property type="match status" value="1"/>
</dbReference>
<dbReference type="SUPFAM" id="SSF50677">
    <property type="entry name" value="ValRS/IleRS/LeuRS editing domain"/>
    <property type="match status" value="1"/>
</dbReference>
<dbReference type="PROSITE" id="PS00178">
    <property type="entry name" value="AA_TRNA_LIGASE_I"/>
    <property type="match status" value="1"/>
</dbReference>
<name>SYI_RHOPA</name>
<comment type="function">
    <text evidence="1">Catalyzes the attachment of isoleucine to tRNA(Ile). As IleRS can inadvertently accommodate and process structurally similar amino acids such as valine, to avoid such errors it has two additional distinct tRNA(Ile)-dependent editing activities. One activity is designated as 'pretransfer' editing and involves the hydrolysis of activated Val-AMP. The other activity is designated 'posttransfer' editing and involves deacylation of mischarged Val-tRNA(Ile).</text>
</comment>
<comment type="catalytic activity">
    <reaction evidence="1">
        <text>tRNA(Ile) + L-isoleucine + ATP = L-isoleucyl-tRNA(Ile) + AMP + diphosphate</text>
        <dbReference type="Rhea" id="RHEA:11060"/>
        <dbReference type="Rhea" id="RHEA-COMP:9666"/>
        <dbReference type="Rhea" id="RHEA-COMP:9695"/>
        <dbReference type="ChEBI" id="CHEBI:30616"/>
        <dbReference type="ChEBI" id="CHEBI:33019"/>
        <dbReference type="ChEBI" id="CHEBI:58045"/>
        <dbReference type="ChEBI" id="CHEBI:78442"/>
        <dbReference type="ChEBI" id="CHEBI:78528"/>
        <dbReference type="ChEBI" id="CHEBI:456215"/>
        <dbReference type="EC" id="6.1.1.5"/>
    </reaction>
</comment>
<comment type="subunit">
    <text evidence="1">Monomer.</text>
</comment>
<comment type="subcellular location">
    <subcellularLocation>
        <location evidence="1">Cytoplasm</location>
    </subcellularLocation>
</comment>
<comment type="domain">
    <text evidence="1">IleRS has two distinct active sites: one for aminoacylation and one for editing. The misactivated valine is translocated from the active site to the editing site, which sterically excludes the correctly activated isoleucine. The single editing site contains two valyl binding pockets, one specific for each substrate (Val-AMP or Val-tRNA(Ile)).</text>
</comment>
<comment type="similarity">
    <text evidence="1">Belongs to the class-I aminoacyl-tRNA synthetase family. IleS type 1 subfamily.</text>
</comment>